<name>PYRH_PYRCJ</name>
<reference key="1">
    <citation type="submission" date="2007-02" db="EMBL/GenBank/DDBJ databases">
        <title>Complete sequence of Pyrobaculum calidifontis JCM 11548.</title>
        <authorList>
            <consortium name="US DOE Joint Genome Institute"/>
            <person name="Copeland A."/>
            <person name="Lucas S."/>
            <person name="Lapidus A."/>
            <person name="Barry K."/>
            <person name="Glavina del Rio T."/>
            <person name="Dalin E."/>
            <person name="Tice H."/>
            <person name="Pitluck S."/>
            <person name="Chain P."/>
            <person name="Malfatti S."/>
            <person name="Shin M."/>
            <person name="Vergez L."/>
            <person name="Schmutz J."/>
            <person name="Larimer F."/>
            <person name="Land M."/>
            <person name="Hauser L."/>
            <person name="Kyrpides N."/>
            <person name="Mikhailova N."/>
            <person name="Cozen A.E."/>
            <person name="Fitz-Gibbon S.T."/>
            <person name="House C.H."/>
            <person name="Saltikov C."/>
            <person name="Lowe T.M."/>
            <person name="Richardson P."/>
        </authorList>
    </citation>
    <scope>NUCLEOTIDE SEQUENCE [LARGE SCALE GENOMIC DNA]</scope>
    <source>
        <strain>DSM 21063 / JCM 11548 / VA1</strain>
    </source>
</reference>
<accession>A3MX54</accession>
<gene>
    <name evidence="1" type="primary">pyrH</name>
    <name type="ordered locus">Pcal_1804</name>
</gene>
<sequence length="217" mass="23580">MLVLKLTGRIFDEEDLVAKYAAIIRRIGGKVAVVTGGGEVARRYIAMARKGGASNTFQDLLGIYASRLNALLLISLIGDDAYPKAPSTVEEFLDAWRRHRVVVAGGFQPGQSTATVAALVAEAAGASVLLNAANIDAVYDDDPRRNPNARKIPTLTYDELERILKTSVVPGGYELVDPWSISILRRNCVTTYIFDGRRPEYVEEILRGGNPGSKITC</sequence>
<proteinExistence type="inferred from homology"/>
<keyword id="KW-0067">ATP-binding</keyword>
<keyword id="KW-0963">Cytoplasm</keyword>
<keyword id="KW-0418">Kinase</keyword>
<keyword id="KW-0547">Nucleotide-binding</keyword>
<keyword id="KW-0665">Pyrimidine biosynthesis</keyword>
<keyword id="KW-0808">Transferase</keyword>
<evidence type="ECO:0000255" key="1">
    <source>
        <dbReference type="HAMAP-Rule" id="MF_01220"/>
    </source>
</evidence>
<comment type="function">
    <text evidence="1">Catalyzes the reversible phosphorylation of UMP to UDP.</text>
</comment>
<comment type="catalytic activity">
    <reaction evidence="1">
        <text>UMP + ATP = UDP + ADP</text>
        <dbReference type="Rhea" id="RHEA:24400"/>
        <dbReference type="ChEBI" id="CHEBI:30616"/>
        <dbReference type="ChEBI" id="CHEBI:57865"/>
        <dbReference type="ChEBI" id="CHEBI:58223"/>
        <dbReference type="ChEBI" id="CHEBI:456216"/>
        <dbReference type="EC" id="2.7.4.22"/>
    </reaction>
</comment>
<comment type="activity regulation">
    <text evidence="1">Inhibited by UTP.</text>
</comment>
<comment type="pathway">
    <text evidence="1">Pyrimidine metabolism; CTP biosynthesis via de novo pathway; UDP from UMP (UMPK route): step 1/1.</text>
</comment>
<comment type="subunit">
    <text evidence="1">Homohexamer.</text>
</comment>
<comment type="subcellular location">
    <subcellularLocation>
        <location evidence="1">Cytoplasm</location>
    </subcellularLocation>
</comment>
<comment type="similarity">
    <text evidence="1">Belongs to the UMP kinase family.</text>
</comment>
<protein>
    <recommendedName>
        <fullName evidence="1">Uridylate kinase</fullName>
        <shortName evidence="1">UK</shortName>
        <ecNumber evidence="1">2.7.4.22</ecNumber>
    </recommendedName>
    <alternativeName>
        <fullName evidence="1">Uridine monophosphate kinase</fullName>
        <shortName evidence="1">UMP kinase</shortName>
        <shortName evidence="1">UMPK</shortName>
    </alternativeName>
</protein>
<feature type="chain" id="PRO_0000323995" description="Uridylate kinase">
    <location>
        <begin position="1"/>
        <end position="217"/>
    </location>
</feature>
<feature type="binding site" evidence="1">
    <location>
        <begin position="5"/>
        <end position="9"/>
    </location>
    <ligand>
        <name>ATP</name>
        <dbReference type="ChEBI" id="CHEBI:30616"/>
    </ligand>
</feature>
<feature type="binding site" evidence="1">
    <location>
        <position position="37"/>
    </location>
    <ligand>
        <name>UMP</name>
        <dbReference type="ChEBI" id="CHEBI:57865"/>
    </ligand>
</feature>
<feature type="binding site" evidence="1">
    <location>
        <position position="38"/>
    </location>
    <ligand>
        <name>ATP</name>
        <dbReference type="ChEBI" id="CHEBI:30616"/>
    </ligand>
</feature>
<feature type="binding site" evidence="1">
    <location>
        <position position="42"/>
    </location>
    <ligand>
        <name>ATP</name>
        <dbReference type="ChEBI" id="CHEBI:30616"/>
    </ligand>
</feature>
<feature type="binding site" evidence="1">
    <location>
        <position position="59"/>
    </location>
    <ligand>
        <name>UMP</name>
        <dbReference type="ChEBI" id="CHEBI:57865"/>
    </ligand>
</feature>
<feature type="binding site" evidence="1">
    <location>
        <begin position="107"/>
        <end position="113"/>
    </location>
    <ligand>
        <name>UMP</name>
        <dbReference type="ChEBI" id="CHEBI:57865"/>
    </ligand>
</feature>
<feature type="binding site" evidence="1">
    <location>
        <position position="134"/>
    </location>
    <ligand>
        <name>ATP</name>
        <dbReference type="ChEBI" id="CHEBI:30616"/>
    </ligand>
</feature>
<feature type="binding site" evidence="1">
    <location>
        <position position="139"/>
    </location>
    <ligand>
        <name>ATP</name>
        <dbReference type="ChEBI" id="CHEBI:30616"/>
    </ligand>
</feature>
<feature type="binding site" evidence="1">
    <location>
        <position position="142"/>
    </location>
    <ligand>
        <name>ATP</name>
        <dbReference type="ChEBI" id="CHEBI:30616"/>
    </ligand>
</feature>
<dbReference type="EC" id="2.7.4.22" evidence="1"/>
<dbReference type="EMBL" id="CP000561">
    <property type="protein sequence ID" value="ABO09221.1"/>
    <property type="molecule type" value="Genomic_DNA"/>
</dbReference>
<dbReference type="RefSeq" id="WP_011850480.1">
    <property type="nucleotide sequence ID" value="NC_009073.1"/>
</dbReference>
<dbReference type="SMR" id="A3MX54"/>
<dbReference type="STRING" id="410359.Pcal_1804"/>
<dbReference type="GeneID" id="4908658"/>
<dbReference type="KEGG" id="pcl:Pcal_1804"/>
<dbReference type="eggNOG" id="arCOG00858">
    <property type="taxonomic scope" value="Archaea"/>
</dbReference>
<dbReference type="HOGENOM" id="CLU_079546_0_0_2"/>
<dbReference type="OrthoDB" id="372251at2157"/>
<dbReference type="UniPathway" id="UPA00159">
    <property type="reaction ID" value="UER00275"/>
</dbReference>
<dbReference type="Proteomes" id="UP000001431">
    <property type="component" value="Chromosome"/>
</dbReference>
<dbReference type="GO" id="GO:0005737">
    <property type="term" value="C:cytoplasm"/>
    <property type="evidence" value="ECO:0007669"/>
    <property type="project" value="UniProtKB-SubCell"/>
</dbReference>
<dbReference type="GO" id="GO:0005524">
    <property type="term" value="F:ATP binding"/>
    <property type="evidence" value="ECO:0007669"/>
    <property type="project" value="UniProtKB-KW"/>
</dbReference>
<dbReference type="GO" id="GO:0033862">
    <property type="term" value="F:UMP kinase activity"/>
    <property type="evidence" value="ECO:0007669"/>
    <property type="project" value="UniProtKB-EC"/>
</dbReference>
<dbReference type="GO" id="GO:0044210">
    <property type="term" value="P:'de novo' CTP biosynthetic process"/>
    <property type="evidence" value="ECO:0007669"/>
    <property type="project" value="UniProtKB-UniRule"/>
</dbReference>
<dbReference type="GO" id="GO:0006225">
    <property type="term" value="P:UDP biosynthetic process"/>
    <property type="evidence" value="ECO:0007669"/>
    <property type="project" value="TreeGrafter"/>
</dbReference>
<dbReference type="Gene3D" id="3.40.1160.10">
    <property type="entry name" value="Acetylglutamate kinase-like"/>
    <property type="match status" value="1"/>
</dbReference>
<dbReference type="HAMAP" id="MF_01220_A">
    <property type="entry name" value="PyrH_A"/>
    <property type="match status" value="1"/>
</dbReference>
<dbReference type="InterPro" id="IPR036393">
    <property type="entry name" value="AceGlu_kinase-like_sf"/>
</dbReference>
<dbReference type="InterPro" id="IPR001048">
    <property type="entry name" value="Asp/Glu/Uridylate_kinase"/>
</dbReference>
<dbReference type="InterPro" id="IPR011817">
    <property type="entry name" value="Uridylate_kinase"/>
</dbReference>
<dbReference type="InterPro" id="IPR011818">
    <property type="entry name" value="Uridylate_kinase_arch/spir"/>
</dbReference>
<dbReference type="NCBIfam" id="TIGR02076">
    <property type="entry name" value="pyrH_arch"/>
    <property type="match status" value="1"/>
</dbReference>
<dbReference type="PANTHER" id="PTHR42833">
    <property type="entry name" value="URIDYLATE KINASE"/>
    <property type="match status" value="1"/>
</dbReference>
<dbReference type="PANTHER" id="PTHR42833:SF4">
    <property type="entry name" value="URIDYLATE KINASE PUMPKIN, CHLOROPLASTIC"/>
    <property type="match status" value="1"/>
</dbReference>
<dbReference type="Pfam" id="PF00696">
    <property type="entry name" value="AA_kinase"/>
    <property type="match status" value="1"/>
</dbReference>
<dbReference type="PIRSF" id="PIRSF005650">
    <property type="entry name" value="Uridylate_kin"/>
    <property type="match status" value="1"/>
</dbReference>
<dbReference type="SUPFAM" id="SSF53633">
    <property type="entry name" value="Carbamate kinase-like"/>
    <property type="match status" value="1"/>
</dbReference>
<organism>
    <name type="scientific">Pyrobaculum calidifontis (strain DSM 21063 / JCM 11548 / VA1)</name>
    <dbReference type="NCBI Taxonomy" id="410359"/>
    <lineage>
        <taxon>Archaea</taxon>
        <taxon>Thermoproteota</taxon>
        <taxon>Thermoprotei</taxon>
        <taxon>Thermoproteales</taxon>
        <taxon>Thermoproteaceae</taxon>
        <taxon>Pyrobaculum</taxon>
    </lineage>
</organism>